<accession>A9ISF5</accession>
<dbReference type="EMBL" id="AM260525">
    <property type="protein sequence ID" value="CAK01296.1"/>
    <property type="molecule type" value="Genomic_DNA"/>
</dbReference>
<dbReference type="RefSeq" id="WP_012231475.1">
    <property type="nucleotide sequence ID" value="NC_010161.1"/>
</dbReference>
<dbReference type="SMR" id="A9ISF5"/>
<dbReference type="KEGG" id="btr:BT_0893"/>
<dbReference type="eggNOG" id="COG0244">
    <property type="taxonomic scope" value="Bacteria"/>
</dbReference>
<dbReference type="HOGENOM" id="CLU_092227_0_0_5"/>
<dbReference type="Proteomes" id="UP000001592">
    <property type="component" value="Chromosome"/>
</dbReference>
<dbReference type="GO" id="GO:0015934">
    <property type="term" value="C:large ribosomal subunit"/>
    <property type="evidence" value="ECO:0007669"/>
    <property type="project" value="InterPro"/>
</dbReference>
<dbReference type="GO" id="GO:0070180">
    <property type="term" value="F:large ribosomal subunit rRNA binding"/>
    <property type="evidence" value="ECO:0007669"/>
    <property type="project" value="UniProtKB-UniRule"/>
</dbReference>
<dbReference type="GO" id="GO:0003735">
    <property type="term" value="F:structural constituent of ribosome"/>
    <property type="evidence" value="ECO:0007669"/>
    <property type="project" value="InterPro"/>
</dbReference>
<dbReference type="GO" id="GO:0006412">
    <property type="term" value="P:translation"/>
    <property type="evidence" value="ECO:0007669"/>
    <property type="project" value="UniProtKB-UniRule"/>
</dbReference>
<dbReference type="CDD" id="cd05797">
    <property type="entry name" value="Ribosomal_L10"/>
    <property type="match status" value="1"/>
</dbReference>
<dbReference type="Gene3D" id="3.30.70.1730">
    <property type="match status" value="1"/>
</dbReference>
<dbReference type="Gene3D" id="6.10.250.290">
    <property type="match status" value="1"/>
</dbReference>
<dbReference type="HAMAP" id="MF_00362">
    <property type="entry name" value="Ribosomal_uL10"/>
    <property type="match status" value="1"/>
</dbReference>
<dbReference type="InterPro" id="IPR001790">
    <property type="entry name" value="Ribosomal_uL10"/>
</dbReference>
<dbReference type="InterPro" id="IPR043141">
    <property type="entry name" value="Ribosomal_uL10-like_sf"/>
</dbReference>
<dbReference type="InterPro" id="IPR022973">
    <property type="entry name" value="Ribosomal_uL10_bac"/>
</dbReference>
<dbReference type="InterPro" id="IPR047865">
    <property type="entry name" value="Ribosomal_uL10_bac_type"/>
</dbReference>
<dbReference type="InterPro" id="IPR002363">
    <property type="entry name" value="Ribosomal_uL10_CS_bac"/>
</dbReference>
<dbReference type="NCBIfam" id="NF000955">
    <property type="entry name" value="PRK00099.1-1"/>
    <property type="match status" value="1"/>
</dbReference>
<dbReference type="PANTHER" id="PTHR11560">
    <property type="entry name" value="39S RIBOSOMAL PROTEIN L10, MITOCHONDRIAL"/>
    <property type="match status" value="1"/>
</dbReference>
<dbReference type="Pfam" id="PF00466">
    <property type="entry name" value="Ribosomal_L10"/>
    <property type="match status" value="1"/>
</dbReference>
<dbReference type="SUPFAM" id="SSF160369">
    <property type="entry name" value="Ribosomal protein L10-like"/>
    <property type="match status" value="1"/>
</dbReference>
<dbReference type="PROSITE" id="PS01109">
    <property type="entry name" value="RIBOSOMAL_L10"/>
    <property type="match status" value="1"/>
</dbReference>
<comment type="function">
    <text evidence="1">Forms part of the ribosomal stalk, playing a central role in the interaction of the ribosome with GTP-bound translation factors.</text>
</comment>
<comment type="subunit">
    <text evidence="1">Part of the ribosomal stalk of the 50S ribosomal subunit. The N-terminus interacts with L11 and the large rRNA to form the base of the stalk. The C-terminus forms an elongated spine to which L12 dimers bind in a sequential fashion forming a multimeric L10(L12)X complex.</text>
</comment>
<comment type="similarity">
    <text evidence="1">Belongs to the universal ribosomal protein uL10 family.</text>
</comment>
<protein>
    <recommendedName>
        <fullName evidence="1">Large ribosomal subunit protein uL10</fullName>
    </recommendedName>
    <alternativeName>
        <fullName evidence="2">50S ribosomal protein L10</fullName>
    </alternativeName>
</protein>
<evidence type="ECO:0000255" key="1">
    <source>
        <dbReference type="HAMAP-Rule" id="MF_00362"/>
    </source>
</evidence>
<evidence type="ECO:0000305" key="2"/>
<gene>
    <name evidence="1" type="primary">rplJ</name>
    <name type="ordered locus">BT_0893</name>
</gene>
<proteinExistence type="inferred from homology"/>
<feature type="chain" id="PRO_1000079533" description="Large ribosomal subunit protein uL10">
    <location>
        <begin position="1"/>
        <end position="172"/>
    </location>
</feature>
<keyword id="KW-0687">Ribonucleoprotein</keyword>
<keyword id="KW-0689">Ribosomal protein</keyword>
<keyword id="KW-0694">RNA-binding</keyword>
<keyword id="KW-0699">rRNA-binding</keyword>
<organism>
    <name type="scientific">Bartonella tribocorum (strain CIP 105476 / IBS 506)</name>
    <dbReference type="NCBI Taxonomy" id="382640"/>
    <lineage>
        <taxon>Bacteria</taxon>
        <taxon>Pseudomonadati</taxon>
        <taxon>Pseudomonadota</taxon>
        <taxon>Alphaproteobacteria</taxon>
        <taxon>Hyphomicrobiales</taxon>
        <taxon>Bartonellaceae</taxon>
        <taxon>Bartonella</taxon>
    </lineage>
</organism>
<sequence length="172" mass="18027">MNRAEKREFVTWLNEAFQKSGSVVVAHYSGLTVSQMNDLRSKMGEAGGAVKVAKNRLAKIALQGTESESIAGLFTGQTLIAYSEDPITAPKVAVDFAKSNDKFVILGGSMGATSLTVDAVKSLASLPSLNELRAKLVGMISTPATRIAQVVNAPAGQVARVIGAYAQEDKAA</sequence>
<reference key="1">
    <citation type="journal article" date="2007" name="Nat. Genet.">
        <title>Genomic analysis of Bartonella identifies type IV secretion systems as host adaptability factors.</title>
        <authorList>
            <person name="Saenz H.L."/>
            <person name="Engel P."/>
            <person name="Stoeckli M.C."/>
            <person name="Lanz C."/>
            <person name="Raddatz G."/>
            <person name="Vayssier-Taussat M."/>
            <person name="Birtles R."/>
            <person name="Schuster S.C."/>
            <person name="Dehio C."/>
        </authorList>
    </citation>
    <scope>NUCLEOTIDE SEQUENCE [LARGE SCALE GENOMIC DNA]</scope>
    <source>
        <strain>CIP 105476 / IBS 506</strain>
    </source>
</reference>
<name>RL10_BART1</name>